<dbReference type="EMBL" id="AF387101">
    <property type="protein sequence ID" value="AAL40923.1"/>
    <property type="status" value="ALT_FRAME"/>
    <property type="molecule type" value="mRNA"/>
</dbReference>
<dbReference type="EMBL" id="AF406992">
    <property type="protein sequence ID" value="AAL11723.1"/>
    <property type="molecule type" value="mRNA"/>
</dbReference>
<dbReference type="EMBL" id="AB055890">
    <property type="protein sequence ID" value="BAB62913.1"/>
    <property type="molecule type" value="mRNA"/>
</dbReference>
<dbReference type="EMBL" id="BC050312">
    <property type="protein sequence ID" value="AAH50312.1"/>
    <property type="molecule type" value="mRNA"/>
</dbReference>
<dbReference type="EMBL" id="AF126008">
    <property type="protein sequence ID" value="AAD21311.1"/>
    <property type="status" value="ALT_FRAME"/>
    <property type="molecule type" value="mRNA"/>
</dbReference>
<dbReference type="EMBL" id="AF127481">
    <property type="protein sequence ID" value="AAD40799.1"/>
    <property type="status" value="ALT_SEQ"/>
    <property type="molecule type" value="mRNA"/>
</dbReference>
<dbReference type="EMBL" id="U03634">
    <property type="protein sequence ID" value="AAC50065.1"/>
    <property type="status" value="ALT_SEQ"/>
    <property type="molecule type" value="mRNA"/>
</dbReference>
<dbReference type="EMBL" id="M90360">
    <property type="protein sequence ID" value="AAA58670.1"/>
    <property type="status" value="ALT_TERM"/>
    <property type="molecule type" value="mRNA"/>
</dbReference>
<dbReference type="EMBL" id="AB209414">
    <property type="protein sequence ID" value="BAD92651.1"/>
    <property type="molecule type" value="mRNA"/>
</dbReference>
<dbReference type="CCDS" id="CCDS32319.1">
    <molecule id="Q12802-1"/>
</dbReference>
<dbReference type="CCDS" id="CCDS32320.1">
    <molecule id="Q12802-2"/>
</dbReference>
<dbReference type="PIR" id="A42915">
    <property type="entry name" value="A42915"/>
</dbReference>
<dbReference type="PIR" id="I38434">
    <property type="entry name" value="I38434"/>
</dbReference>
<dbReference type="RefSeq" id="NP_001257475.1">
    <property type="nucleotide sequence ID" value="NM_001270546.1"/>
</dbReference>
<dbReference type="RefSeq" id="NP_006729.4">
    <molecule id="Q12802-2"/>
    <property type="nucleotide sequence ID" value="NM_006738.5"/>
</dbReference>
<dbReference type="RefSeq" id="NP_009131.2">
    <molecule id="Q12802-1"/>
    <property type="nucleotide sequence ID" value="NM_007200.4"/>
</dbReference>
<dbReference type="PDB" id="2DRN">
    <property type="method" value="NMR"/>
    <property type="chains" value="C=1246-1269"/>
</dbReference>
<dbReference type="PDB" id="2LG1">
    <property type="method" value="NMR"/>
    <property type="chains" value="A=2164-2346"/>
</dbReference>
<dbReference type="PDB" id="4D0N">
    <property type="method" value="X-ray"/>
    <property type="resolution" value="2.10 A"/>
    <property type="chains" value="B=1968-2338"/>
</dbReference>
<dbReference type="PDB" id="4D0O">
    <property type="method" value="X-ray"/>
    <property type="resolution" value="2.75 A"/>
    <property type="chains" value="A/B=1972-2207"/>
</dbReference>
<dbReference type="PDB" id="6BCA">
    <property type="method" value="X-ray"/>
    <property type="resolution" value="2.00 A"/>
    <property type="chains" value="A/B=2193-2333"/>
</dbReference>
<dbReference type="PDBsum" id="2DRN"/>
<dbReference type="PDBsum" id="2LG1"/>
<dbReference type="PDBsum" id="4D0N"/>
<dbReference type="PDBsum" id="4D0O"/>
<dbReference type="PDBsum" id="6BCA"/>
<dbReference type="BMRB" id="Q12802"/>
<dbReference type="SMR" id="Q12802"/>
<dbReference type="BioGRID" id="116383">
    <property type="interactions" value="96"/>
</dbReference>
<dbReference type="CORUM" id="Q12802"/>
<dbReference type="DIP" id="DIP-180N"/>
<dbReference type="FunCoup" id="Q12802">
    <property type="interactions" value="667"/>
</dbReference>
<dbReference type="IntAct" id="Q12802">
    <property type="interactions" value="58"/>
</dbReference>
<dbReference type="MINT" id="Q12802"/>
<dbReference type="STRING" id="9606.ENSP00000354718"/>
<dbReference type="ChEMBL" id="CHEMBL4523643"/>
<dbReference type="GlyCosmos" id="Q12802">
    <property type="glycosylation" value="1 site, 1 glycan"/>
</dbReference>
<dbReference type="GlyGen" id="Q12802">
    <property type="glycosylation" value="3 sites, 1 O-linked glycan (1 site)"/>
</dbReference>
<dbReference type="iPTMnet" id="Q12802"/>
<dbReference type="PhosphoSitePlus" id="Q12802"/>
<dbReference type="SwissPalm" id="Q12802"/>
<dbReference type="BioMuta" id="AKAP13"/>
<dbReference type="DMDM" id="134048676"/>
<dbReference type="jPOST" id="Q12802"/>
<dbReference type="MassIVE" id="Q12802"/>
<dbReference type="PaxDb" id="9606-ENSP00000354718"/>
<dbReference type="PeptideAtlas" id="Q12802"/>
<dbReference type="ProteomicsDB" id="58955">
    <molecule id="Q12802-1"/>
</dbReference>
<dbReference type="ProteomicsDB" id="58956">
    <molecule id="Q12802-2"/>
</dbReference>
<dbReference type="ProteomicsDB" id="58957">
    <molecule id="Q12802-4"/>
</dbReference>
<dbReference type="ProteomicsDB" id="58958">
    <molecule id="Q12802-5"/>
</dbReference>
<dbReference type="Pumba" id="Q12802"/>
<dbReference type="Antibodypedia" id="15576">
    <property type="antibodies" value="197 antibodies from 29 providers"/>
</dbReference>
<dbReference type="DNASU" id="11214"/>
<dbReference type="Ensembl" id="ENST00000361243.6">
    <molecule id="Q12802-2"/>
    <property type="protein sequence ID" value="ENSP00000354718.2"/>
    <property type="gene ID" value="ENSG00000170776.22"/>
</dbReference>
<dbReference type="Ensembl" id="ENST00000394518.7">
    <molecule id="Q12802-1"/>
    <property type="protein sequence ID" value="ENSP00000378026.3"/>
    <property type="gene ID" value="ENSG00000170776.22"/>
</dbReference>
<dbReference type="Ensembl" id="ENST00000560302.5">
    <molecule id="Q12802-5"/>
    <property type="protein sequence ID" value="ENSP00000453634.1"/>
    <property type="gene ID" value="ENSG00000170776.22"/>
</dbReference>
<dbReference type="GeneID" id="11214"/>
<dbReference type="KEGG" id="hsa:11214"/>
<dbReference type="MANE-Select" id="ENST00000394518.7">
    <property type="protein sequence ID" value="ENSP00000378026.3"/>
    <property type="RefSeq nucleotide sequence ID" value="NM_007200.5"/>
    <property type="RefSeq protein sequence ID" value="NP_009131.2"/>
</dbReference>
<dbReference type="UCSC" id="uc002bls.5">
    <molecule id="Q12802-1"/>
    <property type="organism name" value="human"/>
</dbReference>
<dbReference type="AGR" id="HGNC:371"/>
<dbReference type="CTD" id="11214"/>
<dbReference type="DisGeNET" id="11214"/>
<dbReference type="GeneCards" id="AKAP13"/>
<dbReference type="HGNC" id="HGNC:371">
    <property type="gene designation" value="AKAP13"/>
</dbReference>
<dbReference type="HPA" id="ENSG00000170776">
    <property type="expression patterns" value="Low tissue specificity"/>
</dbReference>
<dbReference type="MalaCards" id="AKAP13"/>
<dbReference type="MIM" id="604686">
    <property type="type" value="gene"/>
</dbReference>
<dbReference type="neXtProt" id="NX_Q12802"/>
<dbReference type="OpenTargets" id="ENSG00000170776"/>
<dbReference type="PharmGKB" id="PA24665"/>
<dbReference type="VEuPathDB" id="HostDB:ENSG00000170776"/>
<dbReference type="eggNOG" id="KOG3520">
    <property type="taxonomic scope" value="Eukaryota"/>
</dbReference>
<dbReference type="GeneTree" id="ENSGT00940000154146"/>
<dbReference type="HOGENOM" id="CLU_076791_0_0_1"/>
<dbReference type="InParanoid" id="Q12802"/>
<dbReference type="OMA" id="NDESMSN"/>
<dbReference type="OrthoDB" id="28045at2759"/>
<dbReference type="PAN-GO" id="Q12802">
    <property type="GO annotations" value="5 GO annotations based on evolutionary models"/>
</dbReference>
<dbReference type="PhylomeDB" id="Q12802"/>
<dbReference type="TreeFam" id="TF325887"/>
<dbReference type="PathwayCommons" id="Q12802"/>
<dbReference type="Reactome" id="R-HSA-193648">
    <property type="pathway name" value="NRAGE signals death through JNK"/>
</dbReference>
<dbReference type="Reactome" id="R-HSA-416482">
    <property type="pathway name" value="G alpha (12/13) signalling events"/>
</dbReference>
<dbReference type="Reactome" id="R-HSA-8980692">
    <property type="pathway name" value="RHOA GTPase cycle"/>
</dbReference>
<dbReference type="Reactome" id="R-HSA-9013026">
    <property type="pathway name" value="RHOB GTPase cycle"/>
</dbReference>
<dbReference type="Reactome" id="R-HSA-9013106">
    <property type="pathway name" value="RHOC GTPase cycle"/>
</dbReference>
<dbReference type="SignaLink" id="Q12802"/>
<dbReference type="SIGNOR" id="Q12802"/>
<dbReference type="BioGRID-ORCS" id="11214">
    <property type="hits" value="18 hits in 1158 CRISPR screens"/>
</dbReference>
<dbReference type="CD-CODE" id="DEE660B4">
    <property type="entry name" value="Stress granule"/>
</dbReference>
<dbReference type="ChiTaRS" id="AKAP13">
    <property type="organism name" value="human"/>
</dbReference>
<dbReference type="EvolutionaryTrace" id="Q12802"/>
<dbReference type="GeneWiki" id="AKAP13"/>
<dbReference type="GenomeRNAi" id="11214"/>
<dbReference type="Pharos" id="Q12802">
    <property type="development level" value="Tbio"/>
</dbReference>
<dbReference type="PRO" id="PR:Q12802"/>
<dbReference type="Proteomes" id="UP000005640">
    <property type="component" value="Chromosome 15"/>
</dbReference>
<dbReference type="RNAct" id="Q12802">
    <property type="molecule type" value="protein"/>
</dbReference>
<dbReference type="Bgee" id="ENSG00000170776">
    <property type="expression patterns" value="Expressed in tendon of biceps brachii and 207 other cell types or tissues"/>
</dbReference>
<dbReference type="ExpressionAtlas" id="Q12802">
    <property type="expression patterns" value="baseline and differential"/>
</dbReference>
<dbReference type="GO" id="GO:0005938">
    <property type="term" value="C:cell cortex"/>
    <property type="evidence" value="ECO:0000314"/>
    <property type="project" value="UniProtKB"/>
</dbReference>
<dbReference type="GO" id="GO:0005829">
    <property type="term" value="C:cytosol"/>
    <property type="evidence" value="ECO:0000314"/>
    <property type="project" value="HPA"/>
</dbReference>
<dbReference type="GO" id="GO:0016020">
    <property type="term" value="C:membrane"/>
    <property type="evidence" value="ECO:0007005"/>
    <property type="project" value="UniProtKB"/>
</dbReference>
<dbReference type="GO" id="GO:0005634">
    <property type="term" value="C:nucleus"/>
    <property type="evidence" value="ECO:0007669"/>
    <property type="project" value="UniProtKB-SubCell"/>
</dbReference>
<dbReference type="GO" id="GO:0005085">
    <property type="term" value="F:guanyl-nucleotide exchange factor activity"/>
    <property type="evidence" value="ECO:0000314"/>
    <property type="project" value="UniProtKB"/>
</dbReference>
<dbReference type="GO" id="GO:0005078">
    <property type="term" value="F:MAP-kinase scaffold activity"/>
    <property type="evidence" value="ECO:0000314"/>
    <property type="project" value="UniProtKB"/>
</dbReference>
<dbReference type="GO" id="GO:0060090">
    <property type="term" value="F:molecular adaptor activity"/>
    <property type="evidence" value="ECO:0000314"/>
    <property type="project" value="UniProtKB"/>
</dbReference>
<dbReference type="GO" id="GO:0051018">
    <property type="term" value="F:protein kinase A binding"/>
    <property type="evidence" value="ECO:0000314"/>
    <property type="project" value="UniProtKB"/>
</dbReference>
<dbReference type="GO" id="GO:0031267">
    <property type="term" value="F:small GTPase binding"/>
    <property type="evidence" value="ECO:0000353"/>
    <property type="project" value="UniProtKB"/>
</dbReference>
<dbReference type="GO" id="GO:0008270">
    <property type="term" value="F:zinc ion binding"/>
    <property type="evidence" value="ECO:0007669"/>
    <property type="project" value="UniProtKB-KW"/>
</dbReference>
<dbReference type="GO" id="GO:0071875">
    <property type="term" value="P:adrenergic receptor signaling pathway"/>
    <property type="evidence" value="ECO:0000315"/>
    <property type="project" value="UniProtKB"/>
</dbReference>
<dbReference type="GO" id="GO:0060348">
    <property type="term" value="P:bone development"/>
    <property type="evidence" value="ECO:0000250"/>
    <property type="project" value="UniProtKB"/>
</dbReference>
<dbReference type="GO" id="GO:0055007">
    <property type="term" value="P:cardiac muscle cell differentiation"/>
    <property type="evidence" value="ECO:0000250"/>
    <property type="project" value="UniProtKB"/>
</dbReference>
<dbReference type="GO" id="GO:0007186">
    <property type="term" value="P:G protein-coupled receptor signaling pathway"/>
    <property type="evidence" value="ECO:0000314"/>
    <property type="project" value="UniProtKB"/>
</dbReference>
<dbReference type="GO" id="GO:0007507">
    <property type="term" value="P:heart development"/>
    <property type="evidence" value="ECO:0000250"/>
    <property type="project" value="UniProtKB"/>
</dbReference>
<dbReference type="GO" id="GO:0043123">
    <property type="term" value="P:positive regulation of canonical NF-kappaB signal transduction"/>
    <property type="evidence" value="ECO:0000315"/>
    <property type="project" value="UniProtKB"/>
</dbReference>
<dbReference type="GO" id="GO:0035025">
    <property type="term" value="P:positive regulation of Rho protein signal transduction"/>
    <property type="evidence" value="ECO:0000314"/>
    <property type="project" value="UniProtKB"/>
</dbReference>
<dbReference type="GO" id="GO:0035023">
    <property type="term" value="P:regulation of Rho protein signal transduction"/>
    <property type="evidence" value="ECO:0000318"/>
    <property type="project" value="GO_Central"/>
</dbReference>
<dbReference type="GO" id="GO:0060297">
    <property type="term" value="P:regulation of sarcomere organization"/>
    <property type="evidence" value="ECO:0000250"/>
    <property type="project" value="UniProtKB"/>
</dbReference>
<dbReference type="GO" id="GO:0051056">
    <property type="term" value="P:regulation of small GTPase mediated signal transduction"/>
    <property type="evidence" value="ECO:0000304"/>
    <property type="project" value="Reactome"/>
</dbReference>
<dbReference type="CDD" id="cd20878">
    <property type="entry name" value="C1_AKAP13"/>
    <property type="match status" value="1"/>
</dbReference>
<dbReference type="CDD" id="cd13392">
    <property type="entry name" value="PH_AKAP13"/>
    <property type="match status" value="1"/>
</dbReference>
<dbReference type="CDD" id="cd00160">
    <property type="entry name" value="RhoGEF"/>
    <property type="match status" value="1"/>
</dbReference>
<dbReference type="FunFam" id="3.30.60.20:FF:000038">
    <property type="entry name" value="A-kinase anchor protein 13 isoform X1"/>
    <property type="match status" value="1"/>
</dbReference>
<dbReference type="FunFam" id="1.20.900.10:FF:000004">
    <property type="entry name" value="Rho guanine nucleotide exchange factor 2"/>
    <property type="match status" value="1"/>
</dbReference>
<dbReference type="FunFam" id="2.30.29.30:FF:000021">
    <property type="entry name" value="Rho guanine nucleotide exchange factor 2"/>
    <property type="match status" value="1"/>
</dbReference>
<dbReference type="Gene3D" id="3.30.60.20">
    <property type="match status" value="1"/>
</dbReference>
<dbReference type="Gene3D" id="1.20.900.10">
    <property type="entry name" value="Dbl homology (DH) domain"/>
    <property type="match status" value="1"/>
</dbReference>
<dbReference type="Gene3D" id="2.30.29.30">
    <property type="entry name" value="Pleckstrin-homology domain (PH domain)/Phosphotyrosine-binding domain (PTB)"/>
    <property type="match status" value="1"/>
</dbReference>
<dbReference type="IDEAL" id="IID00210"/>
<dbReference type="InterPro" id="IPR046349">
    <property type="entry name" value="C1-like_sf"/>
</dbReference>
<dbReference type="InterPro" id="IPR035899">
    <property type="entry name" value="DBL_dom_sf"/>
</dbReference>
<dbReference type="InterPro" id="IPR000219">
    <property type="entry name" value="DH_dom"/>
</dbReference>
<dbReference type="InterPro" id="IPR002219">
    <property type="entry name" value="PE/DAG-bd"/>
</dbReference>
<dbReference type="InterPro" id="IPR011993">
    <property type="entry name" value="PH-like_dom_sf"/>
</dbReference>
<dbReference type="InterPro" id="IPR041020">
    <property type="entry name" value="PH_16"/>
</dbReference>
<dbReference type="InterPro" id="IPR001849">
    <property type="entry name" value="PH_domain"/>
</dbReference>
<dbReference type="InterPro" id="IPR051632">
    <property type="entry name" value="Rho_GEF"/>
</dbReference>
<dbReference type="InterPro" id="IPR018459">
    <property type="entry name" value="RII-bd_1"/>
</dbReference>
<dbReference type="PANTHER" id="PTHR13944:SF18">
    <property type="entry name" value="A-KINASE ANCHOR PROTEIN 13"/>
    <property type="match status" value="1"/>
</dbReference>
<dbReference type="PANTHER" id="PTHR13944">
    <property type="entry name" value="AGAP007712-PA"/>
    <property type="match status" value="1"/>
</dbReference>
<dbReference type="Pfam" id="PF17838">
    <property type="entry name" value="PH_16"/>
    <property type="match status" value="1"/>
</dbReference>
<dbReference type="Pfam" id="PF00621">
    <property type="entry name" value="RhoGEF"/>
    <property type="match status" value="1"/>
</dbReference>
<dbReference type="Pfam" id="PF10522">
    <property type="entry name" value="RII_binding_1"/>
    <property type="match status" value="1"/>
</dbReference>
<dbReference type="SMART" id="SM00109">
    <property type="entry name" value="C1"/>
    <property type="match status" value="1"/>
</dbReference>
<dbReference type="SMART" id="SM00233">
    <property type="entry name" value="PH"/>
    <property type="match status" value="1"/>
</dbReference>
<dbReference type="SMART" id="SM00325">
    <property type="entry name" value="RhoGEF"/>
    <property type="match status" value="1"/>
</dbReference>
<dbReference type="SUPFAM" id="SSF57889">
    <property type="entry name" value="Cysteine-rich domain"/>
    <property type="match status" value="1"/>
</dbReference>
<dbReference type="SUPFAM" id="SSF48065">
    <property type="entry name" value="DBL homology domain (DH-domain)"/>
    <property type="match status" value="1"/>
</dbReference>
<dbReference type="SUPFAM" id="SSF50729">
    <property type="entry name" value="PH domain-like"/>
    <property type="match status" value="1"/>
</dbReference>
<dbReference type="PROSITE" id="PS50010">
    <property type="entry name" value="DH_2"/>
    <property type="match status" value="1"/>
</dbReference>
<dbReference type="PROSITE" id="PS50003">
    <property type="entry name" value="PH_DOMAIN"/>
    <property type="match status" value="1"/>
</dbReference>
<dbReference type="PROSITE" id="PS00479">
    <property type="entry name" value="ZF_DAG_PE_1"/>
    <property type="match status" value="1"/>
</dbReference>
<dbReference type="PROSITE" id="PS50081">
    <property type="entry name" value="ZF_DAG_PE_2"/>
    <property type="match status" value="1"/>
</dbReference>
<protein>
    <recommendedName>
        <fullName>A-kinase anchor protein 13</fullName>
        <shortName>AKAP-13</shortName>
    </recommendedName>
    <alternativeName>
        <fullName evidence="26">AKAP-Lbc</fullName>
    </alternativeName>
    <alternativeName>
        <fullName evidence="31">Breast cancer nuclear receptor-binding auxiliary protein</fullName>
    </alternativeName>
    <alternativeName>
        <fullName>Guanine nucleotide exchange factor Lbc</fullName>
    </alternativeName>
    <alternativeName>
        <fullName evidence="27">Human thyroid-anchoring protein 31</fullName>
    </alternativeName>
    <alternativeName>
        <fullName evidence="29">Lymphoid blast crisis oncogene</fullName>
        <shortName evidence="29">LBC oncogene</shortName>
    </alternativeName>
    <alternativeName>
        <fullName>Non-oncogenic Rho GTPase-specific GTP exchange factor</fullName>
    </alternativeName>
    <alternativeName>
        <fullName>Protein kinase A-anchoring protein 13</fullName>
        <shortName>PRKA13</shortName>
    </alternativeName>
    <alternativeName>
        <fullName>p47</fullName>
    </alternativeName>
</protein>
<feature type="chain" id="PRO_0000080963" description="A-kinase anchor protein 13">
    <location>
        <begin position="1"/>
        <end position="2813"/>
    </location>
</feature>
<feature type="domain" description="DH" evidence="4">
    <location>
        <begin position="1994"/>
        <end position="2191"/>
    </location>
</feature>
<feature type="domain" description="PH" evidence="5">
    <location>
        <begin position="2231"/>
        <end position="2333"/>
    </location>
</feature>
<feature type="zinc finger region" description="Phorbol-ester/DAG-type" evidence="6">
    <location>
        <begin position="1791"/>
        <end position="1838"/>
    </location>
</feature>
<feature type="region of interest" description="Disordered" evidence="7">
    <location>
        <begin position="304"/>
        <end position="400"/>
    </location>
</feature>
<feature type="region of interest" description="Disordered" evidence="7">
    <location>
        <begin position="415"/>
        <end position="439"/>
    </location>
</feature>
<feature type="region of interest" description="Important for interaction with PRKAR2A">
    <location>
        <begin position="494"/>
        <end position="516"/>
    </location>
</feature>
<feature type="region of interest" description="Disordered" evidence="7">
    <location>
        <begin position="539"/>
        <end position="585"/>
    </location>
</feature>
<feature type="region of interest" description="Disordered" evidence="7">
    <location>
        <begin position="632"/>
        <end position="653"/>
    </location>
</feature>
<feature type="region of interest" description="Disordered" evidence="7">
    <location>
        <begin position="690"/>
        <end position="726"/>
    </location>
</feature>
<feature type="region of interest" description="Disordered" evidence="7">
    <location>
        <begin position="805"/>
        <end position="856"/>
    </location>
</feature>
<feature type="region of interest" description="Disordered" evidence="7">
    <location>
        <begin position="939"/>
        <end position="965"/>
    </location>
</feature>
<feature type="region of interest" description="Disordered" evidence="7">
    <location>
        <begin position="1431"/>
        <end position="1455"/>
    </location>
</feature>
<feature type="region of interest" description="Disordered" evidence="7">
    <location>
        <begin position="1467"/>
        <end position="1542"/>
    </location>
</feature>
<feature type="region of interest" description="Important for interaction with MAP2K3" evidence="17">
    <location>
        <begin position="1585"/>
        <end position="1715"/>
    </location>
</feature>
<feature type="region of interest" description="Disordered" evidence="7">
    <location>
        <begin position="1601"/>
        <end position="1638"/>
    </location>
</feature>
<feature type="region of interest" description="Disordered" evidence="7">
    <location>
        <begin position="1755"/>
        <end position="1793"/>
    </location>
</feature>
<feature type="region of interest" description="Interaction with ESR1" evidence="22">
    <location>
        <begin position="1919"/>
        <end position="2813"/>
    </location>
</feature>
<feature type="region of interest" description="Disordered" evidence="7">
    <location>
        <begin position="2466"/>
        <end position="2502"/>
    </location>
</feature>
<feature type="region of interest" description="Disordered" evidence="7">
    <location>
        <begin position="2665"/>
        <end position="2813"/>
    </location>
</feature>
<feature type="coiled-coil region" evidence="3">
    <location>
        <begin position="1758"/>
        <end position="1790"/>
    </location>
</feature>
<feature type="coiled-coil region" evidence="3">
    <location>
        <begin position="2345"/>
        <end position="2381"/>
    </location>
</feature>
<feature type="coiled-coil region" evidence="3">
    <location>
        <begin position="2568"/>
        <end position="2683"/>
    </location>
</feature>
<feature type="compositionally biased region" description="Polar residues" evidence="7">
    <location>
        <begin position="427"/>
        <end position="439"/>
    </location>
</feature>
<feature type="compositionally biased region" description="Basic and acidic residues" evidence="7">
    <location>
        <begin position="561"/>
        <end position="577"/>
    </location>
</feature>
<feature type="compositionally biased region" description="Polar residues" evidence="7">
    <location>
        <begin position="690"/>
        <end position="702"/>
    </location>
</feature>
<feature type="compositionally biased region" description="Basic and acidic residues" evidence="7">
    <location>
        <begin position="835"/>
        <end position="844"/>
    </location>
</feature>
<feature type="compositionally biased region" description="Polar residues" evidence="7">
    <location>
        <begin position="847"/>
        <end position="856"/>
    </location>
</feature>
<feature type="compositionally biased region" description="Polar residues" evidence="7">
    <location>
        <begin position="939"/>
        <end position="948"/>
    </location>
</feature>
<feature type="compositionally biased region" description="Low complexity" evidence="7">
    <location>
        <begin position="1467"/>
        <end position="1478"/>
    </location>
</feature>
<feature type="compositionally biased region" description="Polar residues" evidence="7">
    <location>
        <begin position="1488"/>
        <end position="1497"/>
    </location>
</feature>
<feature type="compositionally biased region" description="Acidic residues" evidence="7">
    <location>
        <begin position="1525"/>
        <end position="1540"/>
    </location>
</feature>
<feature type="compositionally biased region" description="Polar residues" evidence="7">
    <location>
        <begin position="1615"/>
        <end position="1626"/>
    </location>
</feature>
<feature type="compositionally biased region" description="Basic and acidic residues" evidence="7">
    <location>
        <begin position="1628"/>
        <end position="1638"/>
    </location>
</feature>
<feature type="compositionally biased region" description="Basic and acidic residues" evidence="7">
    <location>
        <begin position="1761"/>
        <end position="1788"/>
    </location>
</feature>
<feature type="compositionally biased region" description="Basic and acidic residues" evidence="7">
    <location>
        <begin position="2491"/>
        <end position="2502"/>
    </location>
</feature>
<feature type="compositionally biased region" description="Basic and acidic residues" evidence="7">
    <location>
        <begin position="2665"/>
        <end position="2684"/>
    </location>
</feature>
<feature type="compositionally biased region" description="Polar residues" evidence="7">
    <location>
        <begin position="2720"/>
        <end position="2735"/>
    </location>
</feature>
<feature type="compositionally biased region" description="Low complexity" evidence="7">
    <location>
        <begin position="2760"/>
        <end position="2771"/>
    </location>
</feature>
<feature type="modified residue" description="Phosphoserine" evidence="41">
    <location>
        <position position="790"/>
    </location>
</feature>
<feature type="modified residue" description="Phosphothreonine" evidence="43">
    <location>
        <position position="815"/>
    </location>
</feature>
<feature type="modified residue" description="Phosphothreonine" evidence="1">
    <location>
        <position position="953"/>
    </location>
</feature>
<feature type="modified residue" description="Phosphoserine" evidence="37 39 40 41 42 43">
    <location>
        <position position="983"/>
    </location>
</feature>
<feature type="modified residue" description="Phosphoserine" evidence="45">
    <location>
        <position position="1489"/>
    </location>
</feature>
<feature type="modified residue" description="Phosphoserine" evidence="43">
    <location>
        <position position="1507"/>
    </location>
</feature>
<feature type="modified residue" description="Phosphoserine" evidence="45">
    <location>
        <position position="1540"/>
    </location>
</feature>
<feature type="modified residue" description="Phosphoserine" evidence="12 38">
    <location>
        <position position="1565"/>
    </location>
</feature>
<feature type="modified residue" description="Phosphoserine" evidence="2">
    <location>
        <position position="1602"/>
    </location>
</feature>
<feature type="modified residue" description="Phosphoserine" evidence="40 42">
    <location>
        <position position="1642"/>
    </location>
</feature>
<feature type="modified residue" description="Phosphoserine" evidence="39 40 42">
    <location>
        <position position="1645"/>
    </location>
</feature>
<feature type="modified residue" description="Phosphoserine" evidence="39 40 42">
    <location>
        <position position="1647"/>
    </location>
</feature>
<feature type="modified residue" description="N6-methyllysine" evidence="44">
    <location>
        <position position="1670"/>
    </location>
</feature>
<feature type="modified residue" description="Phosphoserine" evidence="39 40 43">
    <location>
        <position position="1876"/>
    </location>
</feature>
<feature type="modified residue" description="Phosphoserine" evidence="42">
    <location>
        <position position="1895"/>
    </location>
</feature>
<feature type="modified residue" description="Phosphoserine" evidence="39 41 42 43">
    <location>
        <position position="1929"/>
    </location>
</feature>
<feature type="modified residue" description="Phosphothreonine" evidence="42">
    <location>
        <position position="1930"/>
    </location>
</feature>
<feature type="modified residue" description="Phosphoserine" evidence="39 42 43">
    <location>
        <position position="1932"/>
    </location>
</feature>
<feature type="modified residue" description="Phosphoserine" evidence="2">
    <location>
        <position position="1945"/>
    </location>
</feature>
<feature type="modified residue" description="Phosphoserine" evidence="2">
    <location>
        <position position="2345"/>
    </location>
</feature>
<feature type="modified residue" description="Phosphoserine" evidence="39">
    <location>
        <position position="2398"/>
    </location>
</feature>
<feature type="modified residue" description="Phosphothreonine" evidence="43 45">
    <location>
        <position position="2467"/>
    </location>
</feature>
<feature type="modified residue" description="Phosphoserine" evidence="45">
    <location>
        <position position="2473"/>
    </location>
</feature>
<feature type="modified residue" description="Phosphoserine" evidence="42">
    <location>
        <position position="2563"/>
    </location>
</feature>
<feature type="modified residue" description="Phosphoserine" evidence="1">
    <location>
        <position position="2566"/>
    </location>
</feature>
<feature type="modified residue" description="Phosphoserine" evidence="39">
    <location>
        <position position="2703"/>
    </location>
</feature>
<feature type="modified residue" description="Phosphoserine" evidence="39 43">
    <location>
        <position position="2709"/>
    </location>
</feature>
<feature type="modified residue" description="Phosphoserine" evidence="37 39 40 42 43 45">
    <location>
        <position position="2728"/>
    </location>
</feature>
<feature type="splice variant" id="VSP_023486" description="In isoform 4." evidence="28">
    <original>DAGPRETLMHFAVRLGLLRL</original>
    <variation>GENLYDLQTHFKFVIFLLFF</variation>
    <location>
        <begin position="160"/>
        <end position="179"/>
    </location>
</feature>
<feature type="splice variant" id="VSP_023487" description="In isoform 4." evidence="28">
    <location>
        <begin position="180"/>
        <end position="2813"/>
    </location>
</feature>
<feature type="splice variant" id="VSP_023489" description="In isoform 3." evidence="30 32 33">
    <location>
        <begin position="1581"/>
        <end position="1598"/>
    </location>
</feature>
<feature type="splice variant" id="VSP_023490" description="In isoform 2." evidence="26">
    <original>SMRVLGDVVRRPPIHR</original>
    <variation>MSWCPSGVQYSAGLSADFNY</variation>
    <location>
        <begin position="1583"/>
        <end position="1598"/>
    </location>
</feature>
<feature type="splice variant" id="VSP_023491" description="In isoform 3." evidence="30 32 33">
    <location>
        <begin position="1950"/>
        <end position="1951"/>
    </location>
</feature>
<feature type="sequence variant" id="VAR_030925" description="In dbSNP:rs2061821." evidence="25">
    <original>M</original>
    <variation>T</variation>
    <location>
        <position position="452"/>
    </location>
</feature>
<feature type="sequence variant" id="VAR_030926" description="In dbSNP:rs2061822." evidence="25">
    <original>W</original>
    <variation>R</variation>
    <location>
        <position position="494"/>
    </location>
</feature>
<feature type="sequence variant" id="VAR_051986" description="In dbSNP:rs34434221.">
    <original>K</original>
    <variation>Q</variation>
    <location>
        <position position="526"/>
    </location>
</feature>
<feature type="sequence variant" id="VAR_030927" description="In dbSNP:rs2061824." evidence="11 25">
    <original>R</original>
    <variation>C</variation>
    <location>
        <position position="574"/>
    </location>
</feature>
<feature type="sequence variant" id="VAR_030928" description="In dbSNP:rs745191." evidence="9">
    <original>G</original>
    <variation>V</variation>
    <location>
        <position position="624"/>
    </location>
</feature>
<feature type="sequence variant" id="VAR_030929" description="In dbSNP:rs7177107." evidence="25">
    <original>E</original>
    <variation>K</variation>
    <location>
        <position position="689"/>
    </location>
</feature>
<feature type="sequence variant" id="VAR_030930" description="In dbSNP:rs4075256." evidence="25">
    <original>V</original>
    <variation>A</variation>
    <location>
        <position position="845"/>
    </location>
</feature>
<feature type="sequence variant" id="VAR_030931" description="In dbSNP:rs4075254." evidence="9 25">
    <original>V</original>
    <variation>M</variation>
    <location>
        <position position="897"/>
    </location>
</feature>
<feature type="sequence variant" id="VAR_030932" description="In dbSNP:rs4843074." evidence="25">
    <original>P</original>
    <variation>A</variation>
    <location>
        <position position="1062"/>
    </location>
</feature>
<feature type="sequence variant" id="VAR_030933" description="In dbSNP:rs4843075." evidence="25">
    <original>D</original>
    <variation>N</variation>
    <location>
        <position position="1086"/>
    </location>
</feature>
<feature type="sequence variant" id="VAR_030934" description="In dbSNP:rs7162168." evidence="25">
    <original>M</original>
    <variation>T</variation>
    <location>
        <position position="1216"/>
    </location>
</feature>
<feature type="sequence variant" id="VAR_051987" description="In dbSNP:rs35079107.">
    <original>S</original>
    <variation>G</variation>
    <location>
        <position position="1525"/>
    </location>
</feature>
<feature type="sequence variant" id="VAR_030935" description="In dbSNP:rs2241268." evidence="9 11 22 24">
    <original>G</original>
    <variation>S</variation>
    <location>
        <position position="2457"/>
    </location>
</feature>
<feature type="sequence variant" id="VAR_030936" description="In dbSNP:rs2614668.">
    <original>A</original>
    <variation>T</variation>
    <location>
        <position position="2801"/>
    </location>
</feature>
<feature type="mutagenesis site" description="Abolishes interaction with PRKAR2A and leads to constitutive activation of RHOA; when associated with P-1260." evidence="9 12">
    <original>A</original>
    <variation>P</variation>
    <location>
        <position position="1251"/>
    </location>
</feature>
<feature type="mutagenesis site" description="Abolishes interaction with PRKAR2Aand leads to constitutive activation of RHOA; when associated with P-1251." evidence="9 12">
    <original>I</original>
    <variation>P</variation>
    <location>
        <position position="1260"/>
    </location>
</feature>
<feature type="mutagenesis site" description="Abolishes interaction with PRKAR2A." evidence="14">
    <original>A</original>
    <variation>P</variation>
    <location>
        <position position="1265"/>
    </location>
</feature>
<feature type="mutagenesis site" description="Abolishes interaction with YWHAB, leading to constitutive activation of RHOA and MAPK14." evidence="12 17">
    <original>S</original>
    <variation>A</variation>
    <location>
        <position position="1565"/>
    </location>
</feature>
<feature type="mutagenesis site" description="Decreases guanyl nucleotide exchange activity toward RHOA." evidence="20">
    <original>E</original>
    <variation>A</variation>
    <location>
        <position position="2001"/>
    </location>
</feature>
<feature type="mutagenesis site" description="Decreases guanyl nucleotide exchange activity toward RHOA." evidence="20">
    <original>R</original>
    <variation>G</variation>
    <location>
        <position position="2136"/>
    </location>
</feature>
<feature type="mutagenesis site" description="Abolishes guanyl nucleotide exchange activity toward RHOA." evidence="21">
    <original>Q</original>
    <variation>Y</variation>
    <location>
        <position position="2148"/>
    </location>
</feature>
<feature type="mutagenesis site" description="Abolishes guanyl nucleotide exchange activity toward RHOA." evidence="21">
    <original>K</original>
    <variation>Y</variation>
    <location>
        <position position="2152"/>
    </location>
</feature>
<feature type="mutagenesis site" description="Loss of guanyl nucleotide exchange activity toward RHOA." evidence="9">
    <original>Y</original>
    <variation>F</variation>
    <location>
        <position position="2153"/>
    </location>
</feature>
<feature type="mutagenesis site" description="Reduces guanyl nucleotide exchange activity toward RHOA." evidence="21">
    <original>D</original>
    <variation>A</variation>
    <location>
        <position position="2189"/>
    </location>
</feature>
<feature type="mutagenesis site" description="Abolishes guanyl nucleotide exchange activity toward RHOA." evidence="21">
    <original>D</original>
    <variation>Y</variation>
    <location>
        <position position="2189"/>
    </location>
</feature>
<feature type="mutagenesis site" description="Decreases guanyl nucleotide exchange activity toward RHOA." evidence="20">
    <original>R</original>
    <variation>A</variation>
    <location>
        <position position="2289"/>
    </location>
</feature>
<feature type="mutagenesis site" description="Decreases guanyl nucleotide exchange activity toward RHOA." evidence="20">
    <original>F</original>
    <variation>A</variation>
    <location>
        <position position="2299"/>
    </location>
</feature>
<feature type="mutagenesis site" description="Impairs interaction with IKBKB." evidence="18">
    <original>W</original>
    <variation>L</variation>
    <location>
        <position position="2324"/>
    </location>
</feature>
<feature type="sequence conflict" description="In Ref. 1; AAL40923." evidence="34" ref="1">
    <original>G</original>
    <variation>R</variation>
    <location>
        <position position="191"/>
    </location>
</feature>
<feature type="sequence conflict" description="In Ref. 1; AAL40923." evidence="34" ref="1">
    <original>C</original>
    <variation>R</variation>
    <location>
        <position position="354"/>
    </location>
</feature>
<feature type="sequence conflict" description="In Ref. 1; AAL40923." evidence="34" ref="1">
    <original>A</original>
    <variation>V</variation>
    <location>
        <position position="609"/>
    </location>
</feature>
<feature type="sequence conflict" description="In Ref. 1; AAL40923." evidence="34" ref="1">
    <original>A</original>
    <variation>T</variation>
    <location>
        <position position="614"/>
    </location>
</feature>
<feature type="sequence conflict" description="In Ref. 1; AAL40923." evidence="34" ref="1">
    <original>S</original>
    <variation>P</variation>
    <location>
        <position position="618"/>
    </location>
</feature>
<feature type="sequence conflict" description="In Ref. 2; AAL11723." evidence="34" ref="2">
    <original>D</original>
    <variation>A</variation>
    <location>
        <position position="619"/>
    </location>
</feature>
<feature type="sequence conflict" description="In Ref. 9; AAA58670." evidence="34" ref="9">
    <original>M</original>
    <variation>S</variation>
    <location>
        <position position="755"/>
    </location>
</feature>
<feature type="sequence conflict" description="In Ref. 5; AAD21311." evidence="34" ref="5">
    <original>TQA</original>
    <variation>MLY</variation>
    <location>
        <begin position="1385"/>
        <end position="1387"/>
    </location>
</feature>
<feature type="sequence conflict" description="In Ref. 10; BAD92651." evidence="34" ref="10">
    <original>N</original>
    <variation>H</variation>
    <location>
        <position position="1547"/>
    </location>
</feature>
<feature type="sequence conflict" description="In Ref. 9; AAA58670." evidence="34" ref="9">
    <original>EKE</original>
    <variation>KKK</variation>
    <location>
        <begin position="1766"/>
        <end position="1768"/>
    </location>
</feature>
<feature type="sequence conflict" description="In Ref. 6; AAD40799." evidence="34" ref="6">
    <original>A</original>
    <variation>G</variation>
    <location>
        <position position="1877"/>
    </location>
</feature>
<feature type="sequence conflict" description="In Ref. 6; AAD40799." evidence="34" ref="6">
    <original>Q</original>
    <variation>E</variation>
    <location>
        <position position="1897"/>
    </location>
</feature>
<feature type="sequence conflict" description="In Ref. 5; AAD21311." evidence="34" ref="5">
    <original>V</original>
    <variation>D</variation>
    <location>
        <position position="2035"/>
    </location>
</feature>
<feature type="sequence conflict" description="In Ref. 5; AAD21311." evidence="34" ref="5">
    <original>D</original>
    <variation>G</variation>
    <location>
        <position position="2488"/>
    </location>
</feature>
<feature type="sequence conflict" description="In Ref. 3; BAB62913 and 5; AAD21311." evidence="34" ref="3 5">
    <original>QL</original>
    <variation>HV</variation>
    <location>
        <begin position="2667"/>
        <end position="2668"/>
    </location>
</feature>
<feature type="helix" evidence="46">
    <location>
        <begin position="1248"/>
        <end position="1263"/>
    </location>
</feature>
<feature type="turn" evidence="46">
    <location>
        <begin position="1264"/>
        <end position="1268"/>
    </location>
</feature>
<feature type="strand" evidence="48">
    <location>
        <begin position="1973"/>
        <end position="1975"/>
    </location>
</feature>
<feature type="helix" evidence="48">
    <location>
        <begin position="1976"/>
        <end position="1979"/>
    </location>
</feature>
<feature type="helix" evidence="48">
    <location>
        <begin position="1982"/>
        <end position="1986"/>
    </location>
</feature>
<feature type="helix" evidence="48">
    <location>
        <begin position="1990"/>
        <end position="2018"/>
    </location>
</feature>
<feature type="helix" evidence="48">
    <location>
        <begin position="2020"/>
        <end position="2027"/>
    </location>
</feature>
<feature type="helix" evidence="48">
    <location>
        <begin position="2032"/>
        <end position="2038"/>
    </location>
</feature>
<feature type="helix" evidence="48">
    <location>
        <begin position="2042"/>
        <end position="2061"/>
    </location>
</feature>
<feature type="helix" evidence="48">
    <location>
        <begin position="2078"/>
        <end position="2084"/>
    </location>
</feature>
<feature type="helix" evidence="48">
    <location>
        <begin position="2087"/>
        <end position="2117"/>
    </location>
</feature>
<feature type="helix" evidence="48">
    <location>
        <begin position="2119"/>
        <end position="2131"/>
    </location>
</feature>
<feature type="helix" evidence="48">
    <location>
        <begin position="2135"/>
        <end position="2137"/>
    </location>
</feature>
<feature type="helix" evidence="48">
    <location>
        <begin position="2139"/>
        <end position="2149"/>
    </location>
</feature>
<feature type="helix" evidence="48">
    <location>
        <begin position="2150"/>
        <end position="2152"/>
    </location>
</feature>
<feature type="helix" evidence="48">
    <location>
        <begin position="2153"/>
        <end position="2163"/>
    </location>
</feature>
<feature type="turn" evidence="47">
    <location>
        <begin position="2166"/>
        <end position="2168"/>
    </location>
</feature>
<feature type="strand" evidence="47">
    <location>
        <begin position="2177"/>
        <end position="2181"/>
    </location>
</feature>
<feature type="turn" evidence="47">
    <location>
        <begin position="2182"/>
        <end position="2184"/>
    </location>
</feature>
<feature type="helix" evidence="47">
    <location>
        <begin position="2186"/>
        <end position="2191"/>
    </location>
</feature>
<feature type="helix" evidence="49">
    <location>
        <begin position="2194"/>
        <end position="2207"/>
    </location>
</feature>
<feature type="strand" evidence="49">
    <location>
        <begin position="2213"/>
        <end position="2215"/>
    </location>
</feature>
<feature type="strand" evidence="49">
    <location>
        <begin position="2221"/>
        <end position="2223"/>
    </location>
</feature>
<feature type="helix" evidence="49">
    <location>
        <begin position="2224"/>
        <end position="2227"/>
    </location>
</feature>
<feature type="strand" evidence="49">
    <location>
        <begin position="2232"/>
        <end position="2241"/>
    </location>
</feature>
<feature type="strand" evidence="49">
    <location>
        <begin position="2247"/>
        <end position="2265"/>
    </location>
</feature>
<feature type="strand" evidence="49">
    <location>
        <begin position="2268"/>
        <end position="2271"/>
    </location>
</feature>
<feature type="strand" evidence="47">
    <location>
        <begin position="2275"/>
        <end position="2277"/>
    </location>
</feature>
<feature type="strand" evidence="49">
    <location>
        <begin position="2279"/>
        <end position="2283"/>
    </location>
</feature>
<feature type="strand" evidence="49">
    <location>
        <begin position="2286"/>
        <end position="2290"/>
    </location>
</feature>
<feature type="strand" evidence="49">
    <location>
        <begin position="2297"/>
        <end position="2302"/>
    </location>
</feature>
<feature type="strand" evidence="48">
    <location>
        <begin position="2304"/>
        <end position="2307"/>
    </location>
</feature>
<feature type="strand" evidence="49">
    <location>
        <begin position="2309"/>
        <end position="2314"/>
    </location>
</feature>
<feature type="helix" evidence="49">
    <location>
        <begin position="2318"/>
        <end position="2332"/>
    </location>
</feature>
<accession>Q12802</accession>
<accession>Q14572</accession>
<accession>Q59FP6</accession>
<accession>Q86W90</accession>
<accession>Q8WXQ6</accession>
<accession>Q96JP6</accession>
<accession>Q96P79</accession>
<accession>Q9Y5T0</accession>
<accession>Q9Y5T6</accession>
<comment type="function">
    <text evidence="1 9 10 15 17 19 20 21 22 23">Scaffold protein that plays an important role in assembling signaling complexes downstream of several types of G protein-coupled receptors. Activates RHOA in response to signaling via G protein-coupled receptors via its function as Rho guanine nucleotide exchange factor (PubMed:11546812, PubMed:15229649, PubMed:23090968, PubMed:24993829, PubMed:25186459). May also activate other Rho family members (PubMed:11546812). Part of a kinase signaling complex that links ADRA1A and ADRA1B adrenergic receptor signaling to the activation of downstream p38 MAP kinases, such as MAPK11 and MAPK14 (PubMed:17537920, PubMed:21224381, PubMed:23716597). Part of a signaling complex that links ADRA1B signaling to the activation of RHOA and IKBKB/IKKB, leading to increased NF-kappa-B transcriptional activity (PubMed:23090968). Part of a RHOA-dependent signaling cascade that mediates responses to lysophosphatidic acid (LPA), a signaling molecule that activates G-protein coupled receptors and potentiates transcriptional activation of the glucocorticoid receptor NR3C1 (PubMed:16469733). Part of a signaling cascade that stimulates MEF2C-dependent gene expression in response to lysophosphatidic acid (LPA) (By similarity). Part of a signaling pathway that activates MAPK11 and/or MAPK14 and leads to increased transcription activation of the estrogen receptors ESR1 and ESR2 (PubMed:11579095, PubMed:9627117). Part of a signaling cascade that links cAMP and EGFR signaling to BRAF signaling and to PKA-mediated phosphorylation of KSR1, leading to the activation of downstream MAP kinases, such as MAPK1 or MAPK3 (PubMed:21102438). Functions as a scaffold protein that anchors cAMP-dependent protein kinase (PKA) and PRKD1. This promotes activation of PRKD1, leading to increased phosphorylation of HDAC5 and ultimately cardiomyocyte hypertrophy (By similarity). Has no guanine nucleotide exchange activity on CDC42, Ras or Rac (PubMed:11546812). Required for normal embryonic heart development, and in particular for normal sarcomere formation in the developing cardiomyocytes (By similarity). Plays a role in cardiomyocyte growth and cardiac hypertrophy in response to activation of the beta-adrenergic receptor by phenylephrine or isoproterenol (PubMed:17537920, PubMed:23090968). Required for normal adaptive cardiac hypertrophy in response to pressure overload (PubMed:23716597). Plays a role in osteogenesis (By similarity).</text>
</comment>
<comment type="subunit">
    <text evidence="1 8 9 10 12 13 14 15 16 17 20 21 22">Interacts with the cAMP-dependent protein kinase (PKA) holoenzyme and with the regulatory subunit PRKAR2A (PubMed:11285229, PubMed:11546812, PubMed:15229649, PubMed:1618839, PubMed:21102438). Interacts with RHOA (PubMed:11546812, PubMed:17537920, PubMed:24993829, PubMed:25186459). Also interacts with RHOB and RHOC (PubMed:11546812). Identified in a ternary complex with RHOA and PRKAR2A (PubMed:11546812). Identified in a complex with NR3C1 and RHOA (PubMed:16469733). Interacts with BRAF and KSR1 (PubMed:21102438). Identified in a complex with BRAF and KSR1 (PubMed:21102438). Component of a signaling complex containing at least AKAP13, PKN1, MAPK14, ZAK and MAP2K3. Within this complex, AKAP13 interacts directly with PKN1, which in turn recruits MAPK14, MAP2K3 and ZAK (PubMed:21224381). Interacts (phosphorylated form) with YWHAB and YWHAZ (PubMed:15229649, PubMed:21224381). Interaction with YWHAB inhibits activation of RHOA, interferes with PKN1 binding and activation of MAP kinases (PubMed:15229649, PubMed:21224381). Interacts with GNA12 (PubMed:11546812). Interacts with IKBKB (PubMed:23090968). Interacts with ESR1, THRA, PPARA and NME2 (PubMed:15249197, PubMed:9627117). Interacts (via the C-terminal domain after the PH domain) with MEF2C and RXRB. Interacts (via the C-terminal domain after the PH domain) with PRKD1 (By similarity).</text>
</comment>
<comment type="interaction">
    <interactant intactId="EBI-1373806">
        <id>Q12802</id>
    </interactant>
    <interactant intactId="EBI-2825649">
        <id>Q6ZSZ5</id>
        <label>ARHGEF18</label>
    </interactant>
    <organismsDiffer>false</organismsDiffer>
    <experiments>2</experiments>
</comment>
<comment type="interaction">
    <interactant intactId="EBI-1373806">
        <id>Q12802</id>
    </interactant>
    <interactant intactId="EBI-78473">
        <id>P03372</id>
        <label>ESR1</label>
    </interactant>
    <organismsDiffer>false</organismsDiffer>
    <experiments>3</experiments>
</comment>
<comment type="interaction">
    <interactant intactId="EBI-1373806">
        <id>Q12802</id>
    </interactant>
    <interactant intactId="EBI-727668">
        <id>P21980</id>
        <label>TGM2</label>
    </interactant>
    <organismsDiffer>false</organismsDiffer>
    <experiments>4</experiments>
</comment>
<comment type="interaction">
    <interactant intactId="EBI-1373806">
        <id>Q12802</id>
    </interactant>
    <interactant intactId="EBI-359815">
        <id>P31946</id>
        <label>YWHAB</label>
    </interactant>
    <organismsDiffer>false</organismsDiffer>
    <experiments>5</experiments>
</comment>
<comment type="interaction">
    <interactant intactId="EBI-1373806">
        <id>Q12802</id>
    </interactant>
    <interactant intactId="EBI-347088">
        <id>P63104</id>
        <label>YWHAZ</label>
    </interactant>
    <organismsDiffer>false</organismsDiffer>
    <experiments>5</experiments>
</comment>
<comment type="subcellular location">
    <subcellularLocation>
        <location evidence="9 23">Cytoplasm</location>
        <location evidence="9 23">Cytosol</location>
    </subcellularLocation>
    <subcellularLocation>
        <location evidence="22">Cytoplasm</location>
    </subcellularLocation>
    <subcellularLocation>
        <location evidence="9">Cytoplasm</location>
        <location evidence="9">Cell cortex</location>
    </subcellularLocation>
    <subcellularLocation>
        <location evidence="22">Nucleus</location>
    </subcellularLocation>
    <subcellularLocation>
        <location evidence="11 23">Membrane</location>
        <topology evidence="11 36">Peripheral membrane protein</topology>
    </subcellularLocation>
    <text evidence="9">Colocalizes with the actin cytoskeleton at the cell cortex.</text>
</comment>
<comment type="alternative products">
    <event type="alternative splicing"/>
    <isoform>
        <id>Q12802-1</id>
        <name>1</name>
        <sequence type="displayed"/>
    </isoform>
    <isoform>
        <id>Q12802-2</id>
        <name>2</name>
        <sequence type="described" ref="VSP_023490"/>
    </isoform>
    <isoform>
        <id>Q12802-4</id>
        <name>3</name>
        <sequence type="described" ref="VSP_023489 VSP_023491"/>
    </isoform>
    <isoform>
        <id>Q12802-5</id>
        <name>4</name>
        <sequence type="described" ref="VSP_023486 VSP_023487"/>
    </isoform>
</comment>
<comment type="tissue specificity">
    <text evidence="9 22 23">Detected in mammary gland (PubMed:9627117). Detected in heart (at protein level) (PubMed:11546812). Expressed as a 5.3 kb transcript in hematopoietic cells, skeletal muscle, lung, heart, estrogen-responsive reproductive tissues, including breast ductal epithelium. Also found in testis and breast cancer cell lines. Predominantly expressed as a 10 kb transcript in the heart and at lower levels in the lung, placenta, kidney, pancreas, skeletal muscle and liver. Transcripts of between 6-9 kb are also expressed in myeloid and lymphoid lineages, a variety of epithelial tissues, and in skeletal muscle.</text>
</comment>
<comment type="domain">
    <text evidence="20 23 35">The DH domain is sufficient for interaction with RHOA, and for guanine nucleotide exchange (GEF) activity with RHOA (PubMed:24993829). Forms that lack C-terminal regulatory domains have transforming activity and function as oncogenes (PubMed:9891067).</text>
</comment>
<comment type="domain">
    <text evidence="20">The PH domain does not play a role in lipid-binding. Instead, it inhibits the guanine nucleotide exchange (GEF) activity of the isolated DH domain (in vitro).</text>
</comment>
<comment type="domain">
    <text evidence="1">The C-terminal domain after the PH domain is involved in protein-protein interactions that are required for normal, compensatory cardiac hypertrophy in response to pressure overload.</text>
</comment>
<comment type="sequence caution" evidence="34">
    <conflict type="erroneous initiation">
        <sequence resource="EMBL-CDS" id="AAC50065"/>
    </conflict>
    <text>Truncated N-terminus.</text>
</comment>
<comment type="sequence caution" evidence="34">
    <conflict type="miscellaneous discrepancy">
        <sequence resource="EMBL-CDS" id="AAC50065"/>
    </conflict>
    <text>Probable cloning artifact.</text>
</comment>
<comment type="sequence caution" evidence="34">
    <conflict type="frameshift">
        <sequence resource="EMBL-CDS" id="AAD21311"/>
    </conflict>
</comment>
<comment type="sequence caution" evidence="34">
    <conflict type="erroneous initiation">
        <sequence resource="EMBL-CDS" id="AAD40799"/>
    </conflict>
    <text>Truncated N-terminus.</text>
</comment>
<comment type="sequence caution" evidence="34">
    <conflict type="miscellaneous discrepancy">
        <sequence resource="EMBL-CDS" id="AAD40799"/>
    </conflict>
    <text>Intron retention.</text>
</comment>
<comment type="sequence caution" evidence="34">
    <conflict type="frameshift">
        <sequence resource="EMBL-CDS" id="AAL40923"/>
    </conflict>
</comment>
<sequence length="2813" mass="307550">MKLNPQQAPLYGDCVVTVLLAEEDKAEDDVVFYLVFLGSTLRHCTSTRKVSSDTLETIAPGHDCCETVKVQLCASKEGLPVFVVAEEDFHFVQDEAYDAAQFLATSAGNQQALNFTRFLDQSGPPSGDVNSLDKKLVLAFRHLKLPTEWNVLGTDQSLHDAGPRETLMHFAVRLGLLRLTWFLLQKPGGRGALSIHNQEGATPVSLALERGYHKLHQLLTEENAGEPDSWSSLSYEIPYGDCSVRHHRELDIYTLTSESDSHHEHPFPGDGCTGPIFKLMNIQQQLMKTNLKQMDSLMPLMMTAQDPSSAPETDGQFLPCAPEPTDPQRLSSSEETESTQCCPGSPVAQTESPCDLSSIVEEENTDRSCRKKNKGVERKGEEVEPAPIVDSGTVSDQDSCLQSLPDCGVKGTEGLSSCGNRNEETGTKSSGMPTDQESLSSGDAVLQRDLVMEPGTAQYSSGGELGGISTTNVSTPDTAGEMEHGLMNPDATVWKNVLQGGESTKERFENSNIGTAGASDVHVTSKPVDKISVPNCAPAASSLDGNKPAESSLAFSNEETSTEKTAETETSRSREESADAPVDQNSVVIPAAAKDKISDGLEPYTLLAAGIGEAMSPSDLALLGLEEDVMPHQNSETNSSHAQSQKGKSSPICSTTGDDKLCADSACQQNTVTSSGDLVAKLCDNIVSESESTTARQPSSQDPPDASHCEDPQAHTVTSDPVRDTQERADFCPFKVVDNKGQRKDVKLDKPLTNMLEVVSHPHPVVPKMEKELVPDQAVISDSTFSLANSPGSESVTKDDALSFVPSQKEKGTATPELHTATDYRDGPDGNSNEPDTRPLEDRAVGLSTSSTAAELQHGMGNTSLTGLGGEHEGPAPPAIPEALNIKGNTDSSLQSVGKATLALDSVLTEEGKLLVVSESSAAQEQDKDKAVTCSSIKENALSSGTLQEEQRTPPPGQDTQQFHEKSISADCAKDKALQLSNSPGASSAFLKAETEHNKEVAPQVSLLTQGGAAQSLVPPGASLATESRQEALGAEHNSSALLPCLLPDGSDGSDALNCSQPSPLDVGVKNTQSQGKTSACEVSGDVTVDVTGVNALQGMAEPRRENISHNTQDILIPNVLLSQEKNAVLGLPVALQDKAVTDPQGVGTPEMIPLDWEKGKLEGADHSCTMGDAEEAQIDDEAHPVLLQPVAKELPTDMELSAHDDGAPAGVREVMRAPPSGRERSTPSLPCMVSAQDAPLPKGADLIEEAASRIVDAVIEQVKAAGALLTEGEACHMSLSSPELGPLTKGLESAFTEKVSTFPPGESLPMGSTPEEATGSLAGCFAGREEPEKIILPVQGPEPAAEMPDVKAEDEVDFRASSISEEVAVGSIAATLKMKQGPMTQAINRENWCTIEPCPDAASLLASKQSPECENFLDVGLGRECTSKQGVLKRESGSDSDLFHSPSDDMDSIIFPKPEEEHLACDITGSSSSTDDTASLDRHSSHGSDVSLSQILKPNRSRDRQSLDGFYSHGMGAEGRESESEPADPGDVEEEEMDSITEVPANCSVLRSSMRSLSPFRRHSWGPGKNAASDAEMNHRSSMRVLGDVVRRPPIHRRSFSLEGLTGGAGVGNKPSSSLEVSSANAEELRHPFSGEERVDSLVSLSEEDLESDQREHRMFDQQICHRSKQQGFNYCTSAISSPLTKSISLMTISHPGLDNSRPFHSTFHNTSANLTESITEENYNFLPHSPSKKDSEWKSGTKVSRTFSYIKNKMSSSKKSKEKEKEKDKIKEKEKDSKDKEKDKKTVNGHTFSSIPVVGPISCSQCMKPFTNKDAYTCANCSAFVHKGCRESLASCAKVKMKQPKGSLQAHDTSSLPTVIMRNKPSQPKERPRSAVLLVDETATTPIFANRRSQQSVSLSKSVSIQNITGVGNDENMSNTWKFLSHSTDSLNKISKVNESTESLTDEGVGTDMNEGQLLGDFEIESKQLEAESWSRIIDSKFLKQQKKDVVKRQEVIYELMQTEFHHVRTLKIMSGVYSQGMMADLLFEQQMVEKLFPCLDELISIHSQFFQRILERKKESLVDKSEKNFLIKRIGDVLVNQFSGENAERLKKTYGKFCGQHNQSVNYFKDLYAKDKRFQAFVKKKMSSSVVRRLGIPECILLVTQRITKYPVLFQRILQCTKDNEVEQEDLAQSLSLVKDVIGAVDSKVASYEKKVRLNEIYTKTDSKSIMRMKSGQMFAKEDLKRKKLVRDGSVFLKNAAGRLKEVQAVLLTDILVFLQEKDQKYIFASLDQKSTVISLKKLIVREVAHEEKGLFLISMGMTDPEMVEVHASSKEERNSWIQIIQDTINTLNRDEDEGIPSENEEEKKMLDTRARELKEQLHQKDQKILLLLEEKEMIFRDMAECSTPLPEDCSPTHSPRVLFRSNTEEALKGGPLMKSAINEVEILQGLVSGNLGGTLGPTVSSPIEQDVVGPVSLPRRAETFGGFDSHQMNASKGGEKEEGDDGQDLRRTESDSGLKKGGNANLVFMLKRNSEQVVQSVVHLYELLSALQGVVLQQDSYIEDQKLVLSERALTRSLSRPSSLIEQEKQRSLEKQRQDLANLQKQQAQYLEEKRRREREWEARERELREREALLAQREEEVQQGQQDLEKEREELQQKKGTYQYDLERLRAAQKQLEREQEQLRREAERLSQRQTERDLCQVSHPHTKLMRIPSFFPSPEEPPSPSAPSIAKSGSLDSELSVSPKRNSISRTHKDKGPFHILSSTSQTNKGPEGQSQAPASTSASTRLFGLTKPKEKKEKKKKNKTSRSQPGDGPASEVSAEGEEIFC</sequence>
<keyword id="KW-0002">3D-structure</keyword>
<keyword id="KW-0025">Alternative splicing</keyword>
<keyword id="KW-0175">Coiled coil</keyword>
<keyword id="KW-0963">Cytoplasm</keyword>
<keyword id="KW-0344">Guanine-nucleotide releasing factor</keyword>
<keyword id="KW-0472">Membrane</keyword>
<keyword id="KW-0479">Metal-binding</keyword>
<keyword id="KW-0488">Methylation</keyword>
<keyword id="KW-0539">Nucleus</keyword>
<keyword id="KW-0597">Phosphoprotein</keyword>
<keyword id="KW-1267">Proteomics identification</keyword>
<keyword id="KW-0656">Proto-oncogene</keyword>
<keyword id="KW-1185">Reference proteome</keyword>
<keyword id="KW-0862">Zinc</keyword>
<keyword id="KW-0863">Zinc-finger</keyword>
<proteinExistence type="evidence at protein level"/>
<reference key="1">
    <citation type="journal article" date="2001" name="FEBS Lett.">
        <title>Ht31: the first protein kinase A anchoring protein to integrate protein kinase A and Rho signaling.</title>
        <authorList>
            <person name="Klussmann E."/>
            <person name="Edemir B."/>
            <person name="Pepperle B."/>
            <person name="Tamma G."/>
            <person name="Henn V."/>
            <person name="Klauschenz E."/>
            <person name="Hundsrucker C."/>
            <person name="Maric K."/>
            <person name="Rosenthal W."/>
        </authorList>
    </citation>
    <scope>NUCLEOTIDE SEQUENCE [MRNA] (ISOFORM 1)</scope>
    <scope>SUBCELLULAR LOCATION</scope>
    <scope>VARIANTS CYS-574 AND SER-2457</scope>
</reference>
<reference key="2">
    <citation type="journal article" date="2001" name="J. Biol. Chem.">
        <title>AKAP-Lbc anchors protein kinase A and nucleates Galpha 12-selective Rho-mediated stress fiber formation.</title>
        <authorList>
            <person name="Diviani D."/>
            <person name="Soderling J."/>
            <person name="Scott J.D."/>
        </authorList>
    </citation>
    <scope>NUCLEOTIDE SEQUENCE [MRNA] (ISOFORM 2)</scope>
    <scope>FUNCTION</scope>
    <scope>SUBCELLULAR LOCATION</scope>
    <scope>TISSUE SPECIFICITY</scope>
    <scope>INTERACTION WITH PKA HOLOENZYME; PRKAR2A; GNA12; RHOA; RHOB AND RHOC</scope>
    <scope>IDENTIFICATION IN A COMPLEX WITH RHOA AND PRKAR2A</scope>
    <scope>MUTAGENESIS OF ALA-1251; ILE-1260 AND TYR-2153</scope>
    <scope>VARIANTS VAL-624; MET-897 AND SER-2457</scope>
</reference>
<reference key="3">
    <citation type="submission" date="2001-02" db="EMBL/GenBank/DDBJ databases">
        <authorList>
            <person name="Miyamoto M."/>
            <person name="Ono Y."/>
        </authorList>
    </citation>
    <scope>NUCLEOTIDE SEQUENCE [MRNA] (ISOFORM 1)</scope>
    <scope>VARIANTS THR-452; ARG-494; CYS-574; LYS-689; ALA-845; MET-897; ALA-1062; ASN-1086 AND THR-1216</scope>
    <source>
        <tissue>Lung</tissue>
    </source>
</reference>
<reference key="4">
    <citation type="journal article" date="2004" name="Genome Res.">
        <title>The status, quality, and expansion of the NIH full-length cDNA project: the Mammalian Gene Collection (MGC).</title>
        <authorList>
            <consortium name="The MGC Project Team"/>
        </authorList>
    </citation>
    <scope>NUCLEOTIDE SEQUENCE [LARGE SCALE MRNA] (ISOFORM 4)</scope>
    <source>
        <tissue>Hippocampus</tissue>
    </source>
</reference>
<reference key="5">
    <citation type="journal article" date="1998" name="Oncogene">
        <title>Characterization of Brx, a novel Dbl family member that modulates estrogen receptor action.</title>
        <authorList>
            <person name="Rubino D."/>
            <person name="Driggers P."/>
            <person name="Arbit D."/>
            <person name="Kemp L."/>
            <person name="Miller B."/>
            <person name="Coso O."/>
            <person name="Pagliai K."/>
            <person name="Gray K."/>
            <person name="Gutkind S."/>
            <person name="Segars J."/>
        </authorList>
    </citation>
    <scope>NUCLEOTIDE SEQUENCE [MRNA] OF 1385-2813 (ISOFORM 1)</scope>
    <scope>FUNCTION</scope>
    <scope>SUBCELLULAR LOCATION</scope>
    <scope>TISSUE SPECIFICITY</scope>
    <scope>INTERACTION WITH ESR1; THRA AND PPARA</scope>
    <scope>VARIANT SER-2457</scope>
    <source>
        <tissue>Testis</tissue>
    </source>
</reference>
<reference key="6">
    <citation type="journal article" date="1999" name="Mol. Cell. Biol.">
        <title>Activation of the Lbc Rho exchange factor proto-oncogene by truncation of an extended C terminus that regulates transformation and targeting.</title>
        <authorList>
            <person name="Sterpetti P."/>
            <person name="Hack A.A."/>
            <person name="Bashar M.P."/>
            <person name="Park B."/>
            <person name="Cheng S.-D."/>
            <person name="Knoll J.H.M."/>
            <person name="Urano T."/>
            <person name="Feig L.A."/>
            <person name="Toksoz D."/>
        </authorList>
    </citation>
    <scope>NUCLEOTIDE SEQUENCE [MRNA] OF 1827-2813 (ISOFORM 3)</scope>
    <scope>FUNCTION</scope>
    <scope>SUBCELLULAR LOCATION</scope>
    <scope>DOMAIN</scope>
    <scope>TISSUE SPECIFICITY</scope>
    <source>
        <tissue>Skeletal muscle</tissue>
    </source>
</reference>
<reference key="7">
    <citation type="journal article" date="1999" name="Mol. Cell. Biol.">
        <authorList>
            <person name="Sterpetti P."/>
            <person name="Hack A.A."/>
            <person name="Bashar M.P."/>
            <person name="Park B."/>
            <person name="Cheng S.D."/>
            <person name="Knoll J.H."/>
            <person name="Urano T."/>
            <person name="Feig L.A."/>
            <person name="Toksoz D."/>
        </authorList>
    </citation>
    <scope>ERRATUM OF PUBMED:9891067</scope>
</reference>
<reference key="8">
    <citation type="journal article" date="1994" name="Oncogene">
        <title>Novel human oncogene lbc detected by transfection with distinct homology regions to signal transduction products.</title>
        <authorList>
            <person name="Toksoz D."/>
            <person name="Williams D.A."/>
        </authorList>
    </citation>
    <scope>NUCLEOTIDE SEQUENCE [MRNA] OF 1913-2335 (ISOFORM 3)</scope>
</reference>
<reference key="9">
    <citation type="journal article" date="1992" name="J. Biol. Chem.">
        <title>Association of the type II cAMP-dependent protein kinase with a human thyroid RII-anchoring protein. Cloning and characterization of the RII-binding domain.</title>
        <authorList>
            <person name="Carr D.W."/>
            <person name="Hausken Z.E."/>
            <person name="Fraser I.D.C."/>
            <person name="Stofko-Hahn R.E."/>
            <person name="Scott J.D."/>
        </authorList>
    </citation>
    <scope>NUCLEOTIDE SEQUENCE [MRNA] OF 754-1768</scope>
    <scope>INTERACTION WITH PKA HOLOENZYME AND PRKAR2A</scope>
    <scope>MUTAGENESIS OF ALA-1265</scope>
    <source>
        <tissue>Thyroid</tissue>
    </source>
</reference>
<reference key="10">
    <citation type="submission" date="2005-03" db="EMBL/GenBank/DDBJ databases">
        <authorList>
            <person name="Totoki Y."/>
            <person name="Toyoda A."/>
            <person name="Takeda T."/>
            <person name="Sakaki Y."/>
            <person name="Tanaka A."/>
            <person name="Yokoyama S."/>
            <person name="Ohara O."/>
            <person name="Nagase T."/>
            <person name="Kikuno R.F."/>
        </authorList>
    </citation>
    <scope>NUCLEOTIDE SEQUENCE [LARGE SCALE MRNA] OF 1486-2813 (ISOFORM 3)</scope>
    <scope>VARIANT SER-2457</scope>
    <source>
        <tissue>Brain</tissue>
    </source>
</reference>
<reference key="11">
    <citation type="journal article" date="2001" name="J. Biol. Chem.">
        <title>The proto-oncoprotein Brx activates estrogen receptor beta by a p38 mitogen-activated protein kinase pathway.</title>
        <authorList>
            <person name="Driggers P.H."/>
            <person name="Segars J.H."/>
            <person name="Rubino D.M."/>
        </authorList>
    </citation>
    <scope>FUNCTION IN ACTIVATION OF ESR2</scope>
</reference>
<reference key="12">
    <citation type="journal article" date="2004" name="Biochem. Biophys. Res. Commun.">
        <title>Lbc proto-oncogene product binds to and could be negatively regulated by metastasis suppressor nm23-H2.</title>
        <authorList>
            <person name="Iwashita S."/>
            <person name="Fujii M."/>
            <person name="Mukai H."/>
            <person name="Ono Y."/>
            <person name="Miyamoto M."/>
        </authorList>
    </citation>
    <scope>INTERACTION WITH NME2</scope>
</reference>
<reference key="13">
    <citation type="journal article" date="2004" name="EMBO J.">
        <title>Anchoring of both PKA and 14-3-3 inhibits the Rho-GEF activity of the AKAP-Lbc signaling complex.</title>
        <authorList>
            <person name="Diviani D."/>
            <person name="Abuin L."/>
            <person name="Cotecchia S."/>
            <person name="Pansier L."/>
        </authorList>
    </citation>
    <scope>FUNCTION</scope>
    <scope>INTERACTION WITH YWHAB; YWHAZ AND PKA</scope>
    <scope>PHOSPHORYLATION AT SER-1565</scope>
    <scope>MUTAGENESIS OF ALA-1251; ILE-1260 AND SER-1565</scope>
</reference>
<reference key="14">
    <citation type="journal article" date="2006" name="Cell">
        <title>Global, in vivo, and site-specific phosphorylation dynamics in signaling networks.</title>
        <authorList>
            <person name="Olsen J.V."/>
            <person name="Blagoev B."/>
            <person name="Gnad F."/>
            <person name="Macek B."/>
            <person name="Kumar C."/>
            <person name="Mortensen P."/>
            <person name="Mann M."/>
        </authorList>
    </citation>
    <scope>PHOSPHORYLATION [LARGE SCALE ANALYSIS] AT SER-1565</scope>
    <scope>IDENTIFICATION BY MASS SPECTROMETRY [LARGE SCALE ANALYSIS]</scope>
    <source>
        <tissue>Cervix carcinoma</tissue>
    </source>
</reference>
<reference key="15">
    <citation type="journal article" date="2006" name="J. Biol. Chem.">
        <title>Rho family Guanine nucleotide exchange factor Brx couples extracellular signals to the glucocorticoid signaling system.</title>
        <authorList>
            <person name="Kino T."/>
            <person name="Souvatzoglou E."/>
            <person name="Charmandari E."/>
            <person name="Ichijo T."/>
            <person name="Driggers P."/>
            <person name="Mayers C."/>
            <person name="Alatsatianos A."/>
            <person name="Manoli I."/>
            <person name="Westphal H."/>
            <person name="Chrousos G.P."/>
            <person name="Segars J.H."/>
        </authorList>
    </citation>
    <scope>FUNCTION</scope>
    <scope>IDENTIFICATION IN A COMPLEX WITH NR3C1 AND RHOA</scope>
</reference>
<reference key="16">
    <citation type="journal article" date="2006" name="Nat. Biotechnol.">
        <title>A probability-based approach for high-throughput protein phosphorylation analysis and site localization.</title>
        <authorList>
            <person name="Beausoleil S.A."/>
            <person name="Villen J."/>
            <person name="Gerber S.A."/>
            <person name="Rush J."/>
            <person name="Gygi S.P."/>
        </authorList>
    </citation>
    <scope>PHOSPHORYLATION [LARGE SCALE ANALYSIS] AT SER-983 AND SER-2728</scope>
    <scope>IDENTIFICATION BY MASS SPECTROMETRY [LARGE SCALE ANALYSIS]</scope>
    <source>
        <tissue>Cervix carcinoma</tissue>
    </source>
</reference>
<reference key="17">
    <citation type="journal article" date="2007" name="Proc. Natl. Acad. Sci. U.S.A.">
        <title>The A-kinase anchoring protein (AKAP)-Lbc-signaling complex mediates alpha1 adrenergic receptor-induced cardiomyocyte hypertrophy.</title>
        <authorList>
            <person name="Appert-Collin A."/>
            <person name="Cotecchia S."/>
            <person name="Nenniger-Tosato M."/>
            <person name="Pedrazzini T."/>
            <person name="Diviani D."/>
        </authorList>
    </citation>
    <scope>FUNCTION</scope>
    <scope>INTERACTION WITH RHOA</scope>
</reference>
<reference key="18">
    <citation type="journal article" date="2008" name="Mol. Cell">
        <title>Kinase-selective enrichment enables quantitative phosphoproteomics of the kinome across the cell cycle.</title>
        <authorList>
            <person name="Daub H."/>
            <person name="Olsen J.V."/>
            <person name="Bairlein M."/>
            <person name="Gnad F."/>
            <person name="Oppermann F.S."/>
            <person name="Korner R."/>
            <person name="Greff Z."/>
            <person name="Keri G."/>
            <person name="Stemmann O."/>
            <person name="Mann M."/>
        </authorList>
    </citation>
    <scope>IDENTIFICATION BY MASS SPECTROMETRY [LARGE SCALE ANALYSIS]</scope>
    <source>
        <tissue>Cervix carcinoma</tissue>
    </source>
</reference>
<reference key="19">
    <citation type="journal article" date="2008" name="Proc. Natl. Acad. Sci. U.S.A.">
        <title>A quantitative atlas of mitotic phosphorylation.</title>
        <authorList>
            <person name="Dephoure N."/>
            <person name="Zhou C."/>
            <person name="Villen J."/>
            <person name="Beausoleil S.A."/>
            <person name="Bakalarski C.E."/>
            <person name="Elledge S.J."/>
            <person name="Gygi S.P."/>
        </authorList>
    </citation>
    <scope>PHOSPHORYLATION [LARGE SCALE ANALYSIS] AT SER-983; SER-1645; SER-1647; SER-1876; SER-1929; SER-1932; SER-2398; SER-2703; SER-2709 AND SER-2728</scope>
    <scope>IDENTIFICATION BY MASS SPECTROMETRY [LARGE SCALE ANALYSIS]</scope>
    <source>
        <tissue>Cervix carcinoma</tissue>
    </source>
</reference>
<reference key="20">
    <citation type="journal article" date="2009" name="Anal. Chem.">
        <title>Lys-N and trypsin cover complementary parts of the phosphoproteome in a refined SCX-based approach.</title>
        <authorList>
            <person name="Gauci S."/>
            <person name="Helbig A.O."/>
            <person name="Slijper M."/>
            <person name="Krijgsveld J."/>
            <person name="Heck A.J."/>
            <person name="Mohammed S."/>
        </authorList>
    </citation>
    <scope>IDENTIFICATION BY MASS SPECTROMETRY [LARGE SCALE ANALYSIS]</scope>
</reference>
<reference key="21">
    <citation type="journal article" date="2009" name="Sci. Signal.">
        <title>Quantitative phosphoproteomic analysis of T cell receptor signaling reveals system-wide modulation of protein-protein interactions.</title>
        <authorList>
            <person name="Mayya V."/>
            <person name="Lundgren D.H."/>
            <person name="Hwang S.-I."/>
            <person name="Rezaul K."/>
            <person name="Wu L."/>
            <person name="Eng J.K."/>
            <person name="Rodionov V."/>
            <person name="Han D.K."/>
        </authorList>
    </citation>
    <scope>PHOSPHORYLATION [LARGE SCALE ANALYSIS] AT SER-983; SER-1642; SER-1645; SER-1647; SER-1876 AND SER-2728</scope>
    <scope>IDENTIFICATION BY MASS SPECTROMETRY [LARGE SCALE ANALYSIS]</scope>
    <source>
        <tissue>Leukemic T-cell</tissue>
    </source>
</reference>
<reference key="22">
    <citation type="journal article" date="2010" name="Nat. Cell Biol.">
        <title>AKAP-Lbc enhances cyclic AMP control of the ERK1/2 cascade.</title>
        <authorList>
            <person name="Smith F.D."/>
            <person name="Langeberg L.K."/>
            <person name="Cellurale C."/>
            <person name="Pawson T."/>
            <person name="Morrison D.K."/>
            <person name="Davis R.J."/>
            <person name="Scott J.D."/>
        </authorList>
    </citation>
    <scope>FUNCTION</scope>
    <scope>INTERACTION WITH KSR1; BRAF; PKA CATALYTIC SUBUNIT AND PRKAR2A</scope>
</reference>
<reference key="23">
    <citation type="journal article" date="2010" name="Sci. Signal.">
        <title>Quantitative phosphoproteomics reveals widespread full phosphorylation site occupancy during mitosis.</title>
        <authorList>
            <person name="Olsen J.V."/>
            <person name="Vermeulen M."/>
            <person name="Santamaria A."/>
            <person name="Kumar C."/>
            <person name="Miller M.L."/>
            <person name="Jensen L.J."/>
            <person name="Gnad F."/>
            <person name="Cox J."/>
            <person name="Jensen T.S."/>
            <person name="Nigg E.A."/>
            <person name="Brunak S."/>
            <person name="Mann M."/>
        </authorList>
    </citation>
    <scope>PHOSPHORYLATION [LARGE SCALE ANALYSIS] AT SER-790; SER-983 AND SER-1929</scope>
    <scope>IDENTIFICATION BY MASS SPECTROMETRY [LARGE SCALE ANALYSIS]</scope>
    <source>
        <tissue>Cervix carcinoma</tissue>
    </source>
</reference>
<reference key="24">
    <citation type="journal article" date="2011" name="BMC Syst. Biol.">
        <title>Initial characterization of the human central proteome.</title>
        <authorList>
            <person name="Burkard T.R."/>
            <person name="Planyavsky M."/>
            <person name="Kaupe I."/>
            <person name="Breitwieser F.P."/>
            <person name="Buerckstuemmer T."/>
            <person name="Bennett K.L."/>
            <person name="Superti-Furga G."/>
            <person name="Colinge J."/>
        </authorList>
    </citation>
    <scope>IDENTIFICATION BY MASS SPECTROMETRY [LARGE SCALE ANALYSIS]</scope>
</reference>
<reference key="25">
    <citation type="journal article" date="2011" name="J. Biol. Chem.">
        <title>A-kinase anchoring protein (AKAP)-Lbc anchors a PKN-based signaling complex involved in alpha1-adrenergic receptor-induced p38 activation.</title>
        <authorList>
            <person name="Cariolato L."/>
            <person name="Cavin S."/>
            <person name="Diviani D."/>
        </authorList>
    </citation>
    <scope>FUNCTION</scope>
    <scope>INTERACTION WITH PKN1; YWHAB; MAPK14 AND ZAK</scope>
    <scope>IDENTIFICATION IN A COMPLEX WITH PKN1; MAPK14; MAP2K3 AND ZAK</scope>
    <scope>REGION</scope>
    <scope>MUTAGENESIS OF SER-1565</scope>
</reference>
<reference key="26">
    <citation type="journal article" date="2011" name="Sci. Signal.">
        <title>System-wide temporal characterization of the proteome and phosphoproteome of human embryonic stem cell differentiation.</title>
        <authorList>
            <person name="Rigbolt K.T."/>
            <person name="Prokhorova T.A."/>
            <person name="Akimov V."/>
            <person name="Henningsen J."/>
            <person name="Johansen P.T."/>
            <person name="Kratchmarova I."/>
            <person name="Kassem M."/>
            <person name="Mann M."/>
            <person name="Olsen J.V."/>
            <person name="Blagoev B."/>
        </authorList>
    </citation>
    <scope>PHOSPHORYLATION [LARGE SCALE ANALYSIS] AT SER-983; SER-1642; SER-1645; SER-1647; SER-1895; SER-1929; THR-1930; SER-1932; SER-2563 AND SER-2728</scope>
    <scope>IDENTIFICATION BY MASS SPECTROMETRY [LARGE SCALE ANALYSIS]</scope>
</reference>
<reference key="27">
    <citation type="journal article" date="2013" name="J. Proteome Res.">
        <title>Toward a comprehensive characterization of a human cancer cell phosphoproteome.</title>
        <authorList>
            <person name="Zhou H."/>
            <person name="Di Palma S."/>
            <person name="Preisinger C."/>
            <person name="Peng M."/>
            <person name="Polat A.N."/>
            <person name="Heck A.J."/>
            <person name="Mohammed S."/>
        </authorList>
    </citation>
    <scope>PHOSPHORYLATION [LARGE SCALE ANALYSIS] AT THR-815; SER-983; SER-1507; SER-1876; SER-1929; SER-1932; THR-2467; SER-2709 AND SER-2728</scope>
    <scope>IDENTIFICATION BY MASS SPECTROMETRY [LARGE SCALE ANALYSIS]</scope>
    <source>
        <tissue>Cervix carcinoma</tissue>
    </source>
</reference>
<reference key="28">
    <citation type="journal article" date="2013" name="Mol. Cell. Biol.">
        <title>A-kinase-anchoring protein-Lbc anchors IkappaB kinase beta to support interleukin-6-mediated cardiomyocyte hypertrophy.</title>
        <authorList>
            <person name="del Vescovo C.D."/>
            <person name="Cotecchia S."/>
            <person name="Diviani D."/>
        </authorList>
    </citation>
    <scope>FUNCTION</scope>
    <scope>INTERACTION WITH IKBKB</scope>
    <scope>MUTAGENESIS OF TRP-2324</scope>
</reference>
<reference key="29">
    <citation type="journal article" date="2013" name="Mol. Cell. Biol.">
        <title>A-kinase anchoring protein Lbc coordinates a p38 activating signaling complex controlling compensatory cardiac hypertrophy.</title>
        <authorList>
            <person name="Perez Lopez I."/>
            <person name="Cariolato L."/>
            <person name="Maric D."/>
            <person name="Gillet L."/>
            <person name="Abriel H."/>
            <person name="Diviani D."/>
        </authorList>
    </citation>
    <scope>FUNCTION</scope>
</reference>
<reference key="30">
    <citation type="journal article" date="2014" name="J. Proteomics">
        <title>An enzyme assisted RP-RPLC approach for in-depth analysis of human liver phosphoproteome.</title>
        <authorList>
            <person name="Bian Y."/>
            <person name="Song C."/>
            <person name="Cheng K."/>
            <person name="Dong M."/>
            <person name="Wang F."/>
            <person name="Huang J."/>
            <person name="Sun D."/>
            <person name="Wang L."/>
            <person name="Ye M."/>
            <person name="Zou H."/>
        </authorList>
    </citation>
    <scope>PHOSPHORYLATION [LARGE SCALE ANALYSIS] AT SER-1489; SER-1540; THR-2467; SER-2473 AND SER-2728</scope>
    <scope>IDENTIFICATION BY MASS SPECTROMETRY [LARGE SCALE ANALYSIS]</scope>
    <source>
        <tissue>Liver</tissue>
    </source>
</reference>
<reference key="31">
    <citation type="journal article" date="2014" name="Mol. Cell. Proteomics">
        <title>Immunoaffinity enrichment and mass spectrometry analysis of protein methylation.</title>
        <authorList>
            <person name="Guo A."/>
            <person name="Gu H."/>
            <person name="Zhou J."/>
            <person name="Mulhern D."/>
            <person name="Wang Y."/>
            <person name="Lee K.A."/>
            <person name="Yang V."/>
            <person name="Aguiar M."/>
            <person name="Kornhauser J."/>
            <person name="Jia X."/>
            <person name="Ren J."/>
            <person name="Beausoleil S.A."/>
            <person name="Silva J.C."/>
            <person name="Vemulapalli V."/>
            <person name="Bedford M.T."/>
            <person name="Comb M.J."/>
        </authorList>
    </citation>
    <scope>METHYLATION [LARGE SCALE ANALYSIS] AT LYS-1670</scope>
    <scope>IDENTIFICATION BY MASS SPECTROMETRY [LARGE SCALE ANALYSIS]</scope>
    <source>
        <tissue>Colon carcinoma</tissue>
    </source>
</reference>
<reference key="32">
    <citation type="journal article" date="2001" name="EMBO J.">
        <title>A novel mechanism of PKA anchoring revealed by solution structures of anchoring complexes.</title>
        <authorList>
            <person name="Newlon M.G."/>
            <person name="Roy M."/>
            <person name="Morikis D."/>
            <person name="Carr D.W."/>
            <person name="Westphal R."/>
            <person name="Scott J.D."/>
            <person name="Jennings P.A."/>
        </authorList>
    </citation>
    <scope>STRUCTURE BY NMR OF 493-516 IN COMPLEX WITH PRKAR2A PEPTIDE</scope>
    <scope>INTERACTION WITH PRKAR2A</scope>
</reference>
<reference key="33">
    <citation type="journal article" date="2014" name="Biochem. J.">
        <title>The crystal structure of the RhoA-AKAP-Lbc DH-PH domain complex.</title>
        <authorList>
            <person name="Abdul Azeez K.R."/>
            <person name="Knapp S."/>
            <person name="Fernandes J.M."/>
            <person name="Klussmann E."/>
            <person name="Elkins J.M."/>
        </authorList>
    </citation>
    <scope>X-RAY CRYSTALLOGRAPHY (2.10 ANGSTROMS) OF 1968-2338 IN COMPLEX WITH RHOA</scope>
    <scope>FUNCTION</scope>
    <scope>INTERACTION WITH RHOA</scope>
    <scope>DOMAIN</scope>
    <scope>MUTAGENESIS OF GLN-2148; LYS-2152 AND ASP-2189</scope>
</reference>
<reference key="34">
    <citation type="journal article" date="2014" name="J. Biol. Chem.">
        <title>Structural insights into the activation of the RhoA GTPase by the lymphoid blast crisis (Lbc) oncoprotein.</title>
        <authorList>
            <person name="Lenoir M."/>
            <person name="Sugawara M."/>
            <person name="Kaur J."/>
            <person name="Ball L.J."/>
            <person name="Overduin M."/>
        </authorList>
    </citation>
    <scope>STRUCTURE BY NMR OF 2164-2346</scope>
    <scope>FUNCTION</scope>
    <scope>INTERACTION WITH RHOA</scope>
    <scope>DOMAIN</scope>
    <scope>MUTAGENESIS OF GLU-2001; ARG-2136; ARG-2289 AND PHE-2299</scope>
</reference>
<organism>
    <name type="scientific">Homo sapiens</name>
    <name type="common">Human</name>
    <dbReference type="NCBI Taxonomy" id="9606"/>
    <lineage>
        <taxon>Eukaryota</taxon>
        <taxon>Metazoa</taxon>
        <taxon>Chordata</taxon>
        <taxon>Craniata</taxon>
        <taxon>Vertebrata</taxon>
        <taxon>Euteleostomi</taxon>
        <taxon>Mammalia</taxon>
        <taxon>Eutheria</taxon>
        <taxon>Euarchontoglires</taxon>
        <taxon>Primates</taxon>
        <taxon>Haplorrhini</taxon>
        <taxon>Catarrhini</taxon>
        <taxon>Hominidae</taxon>
        <taxon>Homo</taxon>
    </lineage>
</organism>
<gene>
    <name type="primary">AKAP13</name>
    <name evidence="31" type="synonym">BRX</name>
    <name evidence="27" type="synonym">HT31</name>
    <name type="synonym">LBC</name>
</gene>
<evidence type="ECO:0000250" key="1">
    <source>
        <dbReference type="UniProtKB" id="E9Q394"/>
    </source>
</evidence>
<evidence type="ECO:0000250" key="2">
    <source>
        <dbReference type="UniProtKB" id="F1M3G7"/>
    </source>
</evidence>
<evidence type="ECO:0000255" key="3"/>
<evidence type="ECO:0000255" key="4">
    <source>
        <dbReference type="PROSITE-ProRule" id="PRU00062"/>
    </source>
</evidence>
<evidence type="ECO:0000255" key="5">
    <source>
        <dbReference type="PROSITE-ProRule" id="PRU00145"/>
    </source>
</evidence>
<evidence type="ECO:0000255" key="6">
    <source>
        <dbReference type="PROSITE-ProRule" id="PRU00226"/>
    </source>
</evidence>
<evidence type="ECO:0000256" key="7">
    <source>
        <dbReference type="SAM" id="MobiDB-lite"/>
    </source>
</evidence>
<evidence type="ECO:0000269" key="8">
    <source>
    </source>
</evidence>
<evidence type="ECO:0000269" key="9">
    <source>
    </source>
</evidence>
<evidence type="ECO:0000269" key="10">
    <source>
    </source>
</evidence>
<evidence type="ECO:0000269" key="11">
    <source>
    </source>
</evidence>
<evidence type="ECO:0000269" key="12">
    <source>
    </source>
</evidence>
<evidence type="ECO:0000269" key="13">
    <source>
    </source>
</evidence>
<evidence type="ECO:0000269" key="14">
    <source>
    </source>
</evidence>
<evidence type="ECO:0000269" key="15">
    <source>
    </source>
</evidence>
<evidence type="ECO:0000269" key="16">
    <source>
    </source>
</evidence>
<evidence type="ECO:0000269" key="17">
    <source>
    </source>
</evidence>
<evidence type="ECO:0000269" key="18">
    <source>
    </source>
</evidence>
<evidence type="ECO:0000269" key="19">
    <source>
    </source>
</evidence>
<evidence type="ECO:0000269" key="20">
    <source>
    </source>
</evidence>
<evidence type="ECO:0000269" key="21">
    <source>
    </source>
</evidence>
<evidence type="ECO:0000269" key="22">
    <source>
    </source>
</evidence>
<evidence type="ECO:0000269" key="23">
    <source>
    </source>
</evidence>
<evidence type="ECO:0000269" key="24">
    <source ref="10"/>
</evidence>
<evidence type="ECO:0000269" key="25">
    <source ref="3"/>
</evidence>
<evidence type="ECO:0000303" key="26">
    <source>
    </source>
</evidence>
<evidence type="ECO:0000303" key="27">
    <source>
    </source>
</evidence>
<evidence type="ECO:0000303" key="28">
    <source>
    </source>
</evidence>
<evidence type="ECO:0000303" key="29">
    <source>
    </source>
</evidence>
<evidence type="ECO:0000303" key="30">
    <source>
    </source>
</evidence>
<evidence type="ECO:0000303" key="31">
    <source>
    </source>
</evidence>
<evidence type="ECO:0000303" key="32">
    <source>
    </source>
</evidence>
<evidence type="ECO:0000303" key="33">
    <source ref="10"/>
</evidence>
<evidence type="ECO:0000305" key="34"/>
<evidence type="ECO:0000305" key="35">
    <source>
    </source>
</evidence>
<evidence type="ECO:0000305" key="36">
    <source>
    </source>
</evidence>
<evidence type="ECO:0007744" key="37">
    <source>
    </source>
</evidence>
<evidence type="ECO:0007744" key="38">
    <source>
    </source>
</evidence>
<evidence type="ECO:0007744" key="39">
    <source>
    </source>
</evidence>
<evidence type="ECO:0007744" key="40">
    <source>
    </source>
</evidence>
<evidence type="ECO:0007744" key="41">
    <source>
    </source>
</evidence>
<evidence type="ECO:0007744" key="42">
    <source>
    </source>
</evidence>
<evidence type="ECO:0007744" key="43">
    <source>
    </source>
</evidence>
<evidence type="ECO:0007744" key="44">
    <source>
    </source>
</evidence>
<evidence type="ECO:0007744" key="45">
    <source>
    </source>
</evidence>
<evidence type="ECO:0007829" key="46">
    <source>
        <dbReference type="PDB" id="2DRN"/>
    </source>
</evidence>
<evidence type="ECO:0007829" key="47">
    <source>
        <dbReference type="PDB" id="2LG1"/>
    </source>
</evidence>
<evidence type="ECO:0007829" key="48">
    <source>
        <dbReference type="PDB" id="4D0N"/>
    </source>
</evidence>
<evidence type="ECO:0007829" key="49">
    <source>
        <dbReference type="PDB" id="6BCA"/>
    </source>
</evidence>
<name>AKP13_HUMAN</name>